<name>RSMJ_DECAR</name>
<proteinExistence type="inferred from homology"/>
<feature type="chain" id="PRO_0000244271" description="Ribosomal RNA small subunit methyltransferase J">
    <location>
        <begin position="1"/>
        <end position="245"/>
    </location>
</feature>
<feature type="binding site" evidence="1">
    <location>
        <begin position="94"/>
        <end position="95"/>
    </location>
    <ligand>
        <name>S-adenosyl-L-methionine</name>
        <dbReference type="ChEBI" id="CHEBI:59789"/>
    </ligand>
</feature>
<feature type="binding site" evidence="1">
    <location>
        <begin position="110"/>
        <end position="111"/>
    </location>
    <ligand>
        <name>S-adenosyl-L-methionine</name>
        <dbReference type="ChEBI" id="CHEBI:59789"/>
    </ligand>
</feature>
<feature type="binding site" evidence="1">
    <location>
        <position position="164"/>
    </location>
    <ligand>
        <name>S-adenosyl-L-methionine</name>
        <dbReference type="ChEBI" id="CHEBI:59789"/>
    </ligand>
</feature>
<organism>
    <name type="scientific">Dechloromonas aromatica (strain RCB)</name>
    <dbReference type="NCBI Taxonomy" id="159087"/>
    <lineage>
        <taxon>Bacteria</taxon>
        <taxon>Pseudomonadati</taxon>
        <taxon>Pseudomonadota</taxon>
        <taxon>Betaproteobacteria</taxon>
        <taxon>Rhodocyclales</taxon>
        <taxon>Azonexaceae</taxon>
        <taxon>Dechloromonas</taxon>
    </lineage>
</organism>
<keyword id="KW-0963">Cytoplasm</keyword>
<keyword id="KW-0489">Methyltransferase</keyword>
<keyword id="KW-0698">rRNA processing</keyword>
<keyword id="KW-0949">S-adenosyl-L-methionine</keyword>
<keyword id="KW-0808">Transferase</keyword>
<sequence length="245" mass="26286">MGPAFASAALALSEALNLPSSGEADFVLQVGTEGLQLQELGPHAPGPLSVDFVRGPLAHRRLQGGGSGQMIAKAVGIQPGVRPDVLDATAGLGRDAFVLAQLGCNVRLIERHPVIAALLADGLQRARLDPDVRPIIERMHLQTGDAIQLMNAWEGDPPQVIYVDPMFPHREKSSLVKKEMSMLRPLVGDDLDASSLLEAALKLATHRVVVKRPRKAPSVLGPKVGYVLEGKSSRFDIYPKRSLKP</sequence>
<gene>
    <name evidence="1" type="primary">rsmJ</name>
    <name type="ordered locus">Daro_0432</name>
</gene>
<dbReference type="EC" id="2.1.1.242" evidence="1"/>
<dbReference type="EMBL" id="CP000089">
    <property type="protein sequence ID" value="AAZ45189.1"/>
    <property type="molecule type" value="Genomic_DNA"/>
</dbReference>
<dbReference type="SMR" id="Q47IZ2"/>
<dbReference type="STRING" id="159087.Daro_0432"/>
<dbReference type="KEGG" id="dar:Daro_0432"/>
<dbReference type="eggNOG" id="COG0742">
    <property type="taxonomic scope" value="Bacteria"/>
</dbReference>
<dbReference type="HOGENOM" id="CLU_076324_0_1_4"/>
<dbReference type="OrthoDB" id="3191794at2"/>
<dbReference type="GO" id="GO:0005737">
    <property type="term" value="C:cytoplasm"/>
    <property type="evidence" value="ECO:0007669"/>
    <property type="project" value="UniProtKB-SubCell"/>
</dbReference>
<dbReference type="GO" id="GO:0008990">
    <property type="term" value="F:rRNA (guanine-N2-)-methyltransferase activity"/>
    <property type="evidence" value="ECO:0007669"/>
    <property type="project" value="UniProtKB-UniRule"/>
</dbReference>
<dbReference type="CDD" id="cd02440">
    <property type="entry name" value="AdoMet_MTases"/>
    <property type="match status" value="1"/>
</dbReference>
<dbReference type="Gene3D" id="3.40.50.150">
    <property type="entry name" value="Vaccinia Virus protein VP39"/>
    <property type="match status" value="1"/>
</dbReference>
<dbReference type="HAMAP" id="MF_01523">
    <property type="entry name" value="16SrRNA_methyltr_J"/>
    <property type="match status" value="1"/>
</dbReference>
<dbReference type="InterPro" id="IPR007536">
    <property type="entry name" value="16SrRNA_methylTrfase_J"/>
</dbReference>
<dbReference type="InterPro" id="IPR029063">
    <property type="entry name" value="SAM-dependent_MTases_sf"/>
</dbReference>
<dbReference type="PANTHER" id="PTHR36112">
    <property type="entry name" value="RIBOSOMAL RNA SMALL SUBUNIT METHYLTRANSFERASE J"/>
    <property type="match status" value="1"/>
</dbReference>
<dbReference type="PANTHER" id="PTHR36112:SF1">
    <property type="entry name" value="RIBOSOMAL RNA SMALL SUBUNIT METHYLTRANSFERASE J"/>
    <property type="match status" value="1"/>
</dbReference>
<dbReference type="Pfam" id="PF04445">
    <property type="entry name" value="SAM_MT"/>
    <property type="match status" value="1"/>
</dbReference>
<dbReference type="SUPFAM" id="SSF53335">
    <property type="entry name" value="S-adenosyl-L-methionine-dependent methyltransferases"/>
    <property type="match status" value="1"/>
</dbReference>
<accession>Q47IZ2</accession>
<protein>
    <recommendedName>
        <fullName evidence="1">Ribosomal RNA small subunit methyltransferase J</fullName>
        <ecNumber evidence="1">2.1.1.242</ecNumber>
    </recommendedName>
    <alternativeName>
        <fullName evidence="1">16S rRNA m2G1516 methyltransferase</fullName>
    </alternativeName>
    <alternativeName>
        <fullName evidence="1">rRNA (guanine-N(2)-)-methyltransferase</fullName>
    </alternativeName>
</protein>
<reference key="1">
    <citation type="journal article" date="2009" name="BMC Genomics">
        <title>Metabolic analysis of the soil microbe Dechloromonas aromatica str. RCB: indications of a surprisingly complex life-style and cryptic anaerobic pathways for aromatic degradation.</title>
        <authorList>
            <person name="Salinero K.K."/>
            <person name="Keller K."/>
            <person name="Feil W.S."/>
            <person name="Feil H."/>
            <person name="Trong S."/>
            <person name="Di Bartolo G."/>
            <person name="Lapidus A."/>
        </authorList>
    </citation>
    <scope>NUCLEOTIDE SEQUENCE [LARGE SCALE GENOMIC DNA]</scope>
    <source>
        <strain>RCB</strain>
    </source>
</reference>
<comment type="function">
    <text evidence="1">Specifically methylates the guanosine in position 1516 of 16S rRNA.</text>
</comment>
<comment type="catalytic activity">
    <reaction evidence="1">
        <text>guanosine(1516) in 16S rRNA + S-adenosyl-L-methionine = N(2)-methylguanosine(1516) in 16S rRNA + S-adenosyl-L-homocysteine + H(+)</text>
        <dbReference type="Rhea" id="RHEA:43220"/>
        <dbReference type="Rhea" id="RHEA-COMP:10412"/>
        <dbReference type="Rhea" id="RHEA-COMP:10413"/>
        <dbReference type="ChEBI" id="CHEBI:15378"/>
        <dbReference type="ChEBI" id="CHEBI:57856"/>
        <dbReference type="ChEBI" id="CHEBI:59789"/>
        <dbReference type="ChEBI" id="CHEBI:74269"/>
        <dbReference type="ChEBI" id="CHEBI:74481"/>
        <dbReference type="EC" id="2.1.1.242"/>
    </reaction>
</comment>
<comment type="subcellular location">
    <subcellularLocation>
        <location evidence="1">Cytoplasm</location>
    </subcellularLocation>
</comment>
<comment type="similarity">
    <text evidence="1">Belongs to the methyltransferase superfamily. RsmJ family.</text>
</comment>
<evidence type="ECO:0000255" key="1">
    <source>
        <dbReference type="HAMAP-Rule" id="MF_01523"/>
    </source>
</evidence>